<reference key="1">
    <citation type="journal article" date="2004" name="Nucleic Acids Res.">
        <title>Genome sequence of Symbiobacterium thermophilum, an uncultivable bacterium that depends on microbial commensalism.</title>
        <authorList>
            <person name="Ueda K."/>
            <person name="Yamashita A."/>
            <person name="Ishikawa J."/>
            <person name="Shimada M."/>
            <person name="Watsuji T."/>
            <person name="Morimura K."/>
            <person name="Ikeda H."/>
            <person name="Hattori M."/>
            <person name="Beppu T."/>
        </authorList>
    </citation>
    <scope>NUCLEOTIDE SEQUENCE [LARGE SCALE GENOMIC DNA]</scope>
    <source>
        <strain>DSM 24528 / JCM 14929 / IAM 14863 / T</strain>
    </source>
</reference>
<evidence type="ECO:0000255" key="1">
    <source>
        <dbReference type="HAMAP-Rule" id="MF_01197"/>
    </source>
</evidence>
<evidence type="ECO:0000256" key="2">
    <source>
        <dbReference type="SAM" id="MobiDB-lite"/>
    </source>
</evidence>
<name>SEPF_SYMTH</name>
<feature type="chain" id="PRO_0000334121" description="Cell division protein SepF">
    <location>
        <begin position="1"/>
        <end position="203"/>
    </location>
</feature>
<feature type="region of interest" description="Disordered" evidence="2">
    <location>
        <begin position="26"/>
        <end position="51"/>
    </location>
</feature>
<feature type="region of interest" description="Disordered" evidence="2">
    <location>
        <begin position="167"/>
        <end position="203"/>
    </location>
</feature>
<feature type="compositionally biased region" description="Basic and acidic residues" evidence="2">
    <location>
        <begin position="39"/>
        <end position="50"/>
    </location>
</feature>
<feature type="compositionally biased region" description="Basic and acidic residues" evidence="2">
    <location>
        <begin position="183"/>
        <end position="203"/>
    </location>
</feature>
<gene>
    <name evidence="1" type="primary">sepF</name>
    <name type="ordered locus">STH1228</name>
</gene>
<accession>Q67Q30</accession>
<protein>
    <recommendedName>
        <fullName evidence="1">Cell division protein SepF</fullName>
    </recommendedName>
</protein>
<dbReference type="EMBL" id="AP006840">
    <property type="protein sequence ID" value="BAD40213.1"/>
    <property type="molecule type" value="Genomic_DNA"/>
</dbReference>
<dbReference type="RefSeq" id="WP_011195359.1">
    <property type="nucleotide sequence ID" value="NC_006177.1"/>
</dbReference>
<dbReference type="SMR" id="Q67Q30"/>
<dbReference type="STRING" id="292459.STH1228"/>
<dbReference type="KEGG" id="sth:STH1228"/>
<dbReference type="eggNOG" id="COG1799">
    <property type="taxonomic scope" value="Bacteria"/>
</dbReference>
<dbReference type="HOGENOM" id="CLU_1348356_0_0_9"/>
<dbReference type="OrthoDB" id="9815206at2"/>
<dbReference type="Proteomes" id="UP000000417">
    <property type="component" value="Chromosome"/>
</dbReference>
<dbReference type="GO" id="GO:0005737">
    <property type="term" value="C:cytoplasm"/>
    <property type="evidence" value="ECO:0007669"/>
    <property type="project" value="UniProtKB-SubCell"/>
</dbReference>
<dbReference type="GO" id="GO:0000917">
    <property type="term" value="P:division septum assembly"/>
    <property type="evidence" value="ECO:0007669"/>
    <property type="project" value="UniProtKB-KW"/>
</dbReference>
<dbReference type="GO" id="GO:0043093">
    <property type="term" value="P:FtsZ-dependent cytokinesis"/>
    <property type="evidence" value="ECO:0007669"/>
    <property type="project" value="UniProtKB-UniRule"/>
</dbReference>
<dbReference type="Gene3D" id="3.30.110.150">
    <property type="entry name" value="SepF-like protein"/>
    <property type="match status" value="1"/>
</dbReference>
<dbReference type="HAMAP" id="MF_01197">
    <property type="entry name" value="SepF"/>
    <property type="match status" value="1"/>
</dbReference>
<dbReference type="InterPro" id="IPR023052">
    <property type="entry name" value="Cell_div_SepF"/>
</dbReference>
<dbReference type="InterPro" id="IPR007561">
    <property type="entry name" value="Cell_div_SepF/SepF-rel"/>
</dbReference>
<dbReference type="InterPro" id="IPR038594">
    <property type="entry name" value="SepF-like_sf"/>
</dbReference>
<dbReference type="PANTHER" id="PTHR35798">
    <property type="entry name" value="CELL DIVISION PROTEIN SEPF"/>
    <property type="match status" value="1"/>
</dbReference>
<dbReference type="PANTHER" id="PTHR35798:SF1">
    <property type="entry name" value="CELL DIVISION PROTEIN SEPF"/>
    <property type="match status" value="1"/>
</dbReference>
<dbReference type="Pfam" id="PF04472">
    <property type="entry name" value="SepF"/>
    <property type="match status" value="1"/>
</dbReference>
<keyword id="KW-0131">Cell cycle</keyword>
<keyword id="KW-0132">Cell division</keyword>
<keyword id="KW-0963">Cytoplasm</keyword>
<keyword id="KW-1185">Reference proteome</keyword>
<keyword id="KW-0717">Septation</keyword>
<proteinExistence type="inferred from homology"/>
<organism>
    <name type="scientific">Symbiobacterium thermophilum (strain DSM 24528 / JCM 14929 / IAM 14863 / T)</name>
    <dbReference type="NCBI Taxonomy" id="292459"/>
    <lineage>
        <taxon>Bacteria</taxon>
        <taxon>Bacillati</taxon>
        <taxon>Bacillota</taxon>
        <taxon>Clostridia</taxon>
        <taxon>Eubacteriales</taxon>
        <taxon>Symbiobacteriaceae</taxon>
        <taxon>Symbiobacterium</taxon>
    </lineage>
</organism>
<sequence length="203" mass="22169">MPNKPGLWSRLVDYLGFGPEEDEFEDGELEQVQPAYQEEPPRRSAPERRGQVVPISAVPSKQGTVKVVVVEPRSFEEVQTIVDQMKARRPVILNLESLDKDLAQKILNFLNGAIYALNGETQRVSAGIFFYAPPGIDVSTMGRGLTGTAIGGGAVDLPPGVLEKLMGTASGSQEGDLLARTARRSEEGDRTGADRSKFDWRNQ</sequence>
<comment type="function">
    <text evidence="1">Cell division protein that is part of the divisome complex and is recruited early to the Z-ring. Probably stimulates Z-ring formation, perhaps through the cross-linking of FtsZ protofilaments. Its function overlaps with FtsA.</text>
</comment>
<comment type="subunit">
    <text evidence="1">Homodimer. Interacts with FtsZ.</text>
</comment>
<comment type="subcellular location">
    <subcellularLocation>
        <location evidence="1">Cytoplasm</location>
    </subcellularLocation>
    <text evidence="1">Localizes to the division site, in a FtsZ-dependent manner.</text>
</comment>
<comment type="similarity">
    <text evidence="1">Belongs to the SepF family.</text>
</comment>